<protein>
    <recommendedName>
        <fullName evidence="1">Cytochrome c biogenesis protein CcsB</fullName>
    </recommendedName>
</protein>
<reference key="1">
    <citation type="journal article" date="2006" name="Proc. Natl. Acad. Sci. U.S.A.">
        <title>Genome sequence of Synechococcus CC9311: insights into adaptation to a coastal environment.</title>
        <authorList>
            <person name="Palenik B."/>
            <person name="Ren Q."/>
            <person name="Dupont C.L."/>
            <person name="Myers G.S."/>
            <person name="Heidelberg J.F."/>
            <person name="Badger J.H."/>
            <person name="Madupu R."/>
            <person name="Nelson W.C."/>
            <person name="Brinkac L.M."/>
            <person name="Dodson R.J."/>
            <person name="Durkin A.S."/>
            <person name="Daugherty S.C."/>
            <person name="Sullivan S.A."/>
            <person name="Khouri H."/>
            <person name="Mohamoud Y."/>
            <person name="Halpin R."/>
            <person name="Paulsen I.T."/>
        </authorList>
    </citation>
    <scope>NUCLEOTIDE SEQUENCE [LARGE SCALE GENOMIC DNA]</scope>
    <source>
        <strain>CC9311</strain>
    </source>
</reference>
<sequence>MPALRRLFALLSDLRLAILLLLLIAGASALGTILPQNEAPDLYLERFNADPWLGMINGEQMLQLQLDSIYSSVWFLSLLAWLGLALILCSWRRQWPALLATTRWIDYRQPRQLSKLALAESILCSNGESALDTLSEELQKQGWQVQRNEDRLAARRGVIGKVGPLLVHTGLVLLLIGAAWGALSGNRLERFLAPGRALDLLDPSGNNRLSLTLERFAIERDPAGRTEQFRSTLRLDPPGGPSEQRMISVNHPLRYRGMTVYQADWSLAAITVQIGKSPELQLPLRSFPELGEQIWGLVLPTRPDGSEPVLMSTSSEQGPVQVFDADGSLLGNLRPGGASTEIKGLPLRVANIMPASGLLLKRDPGVPLVYAGFAITLLGGGLSLIATRQLWAVLDPAPFQPSNRKLHIGGLCNRNLAGLAAELPRLISRVDESRD</sequence>
<keyword id="KW-0201">Cytochrome c-type biogenesis</keyword>
<keyword id="KW-0472">Membrane</keyword>
<keyword id="KW-1185">Reference proteome</keyword>
<keyword id="KW-0793">Thylakoid</keyword>
<keyword id="KW-0812">Transmembrane</keyword>
<keyword id="KW-1133">Transmembrane helix</keyword>
<evidence type="ECO:0000255" key="1">
    <source>
        <dbReference type="HAMAP-Rule" id="MF_01392"/>
    </source>
</evidence>
<accession>Q0I7P7</accession>
<comment type="function">
    <text evidence="1">Required during biogenesis of c-type cytochromes (cytochrome c6 and cytochrome f) at the step of heme attachment.</text>
</comment>
<comment type="subunit">
    <text evidence="1">May interact with CcsA.</text>
</comment>
<comment type="subcellular location">
    <subcellularLocation>
        <location evidence="1">Cellular thylakoid membrane</location>
        <topology evidence="1">Multi-pass membrane protein</topology>
    </subcellularLocation>
</comment>
<comment type="similarity">
    <text evidence="1">Belongs to the Ccs1/CcsB family.</text>
</comment>
<name>CCS1_SYNS3</name>
<gene>
    <name evidence="1" type="primary">ccsB</name>
    <name evidence="1" type="synonym">ccs1</name>
    <name type="ordered locus">sync_2328</name>
</gene>
<organism>
    <name type="scientific">Synechococcus sp. (strain CC9311)</name>
    <dbReference type="NCBI Taxonomy" id="64471"/>
    <lineage>
        <taxon>Bacteria</taxon>
        <taxon>Bacillati</taxon>
        <taxon>Cyanobacteriota</taxon>
        <taxon>Cyanophyceae</taxon>
        <taxon>Synechococcales</taxon>
        <taxon>Synechococcaceae</taxon>
        <taxon>Synechococcus</taxon>
    </lineage>
</organism>
<proteinExistence type="inferred from homology"/>
<feature type="chain" id="PRO_0000363628" description="Cytochrome c biogenesis protein CcsB">
    <location>
        <begin position="1"/>
        <end position="435"/>
    </location>
</feature>
<feature type="transmembrane region" description="Helical" evidence="1">
    <location>
        <begin position="14"/>
        <end position="34"/>
    </location>
</feature>
<feature type="transmembrane region" description="Helical" evidence="1">
    <location>
        <begin position="72"/>
        <end position="92"/>
    </location>
</feature>
<feature type="transmembrane region" description="Helical" evidence="1">
    <location>
        <begin position="162"/>
        <end position="182"/>
    </location>
</feature>
<dbReference type="EMBL" id="CP000435">
    <property type="protein sequence ID" value="ABI46327.1"/>
    <property type="molecule type" value="Genomic_DNA"/>
</dbReference>
<dbReference type="RefSeq" id="WP_011620236.1">
    <property type="nucleotide sequence ID" value="NC_008319.1"/>
</dbReference>
<dbReference type="STRING" id="64471.sync_2328"/>
<dbReference type="KEGG" id="syg:sync_2328"/>
<dbReference type="eggNOG" id="COG1333">
    <property type="taxonomic scope" value="Bacteria"/>
</dbReference>
<dbReference type="HOGENOM" id="CLU_034630_0_0_3"/>
<dbReference type="OrthoDB" id="9770923at2"/>
<dbReference type="Proteomes" id="UP000001961">
    <property type="component" value="Chromosome"/>
</dbReference>
<dbReference type="GO" id="GO:0031676">
    <property type="term" value="C:plasma membrane-derived thylakoid membrane"/>
    <property type="evidence" value="ECO:0007669"/>
    <property type="project" value="UniProtKB-SubCell"/>
</dbReference>
<dbReference type="GO" id="GO:0017004">
    <property type="term" value="P:cytochrome complex assembly"/>
    <property type="evidence" value="ECO:0007669"/>
    <property type="project" value="UniProtKB-UniRule"/>
</dbReference>
<dbReference type="HAMAP" id="MF_01392">
    <property type="entry name" value="CytC_Ccs1"/>
    <property type="match status" value="1"/>
</dbReference>
<dbReference type="InterPro" id="IPR023494">
    <property type="entry name" value="Cyt_c_bgen_Ccs1/CcsB/ResB"/>
</dbReference>
<dbReference type="InterPro" id="IPR007816">
    <property type="entry name" value="ResB-like_domain"/>
</dbReference>
<dbReference type="PANTHER" id="PTHR31566">
    <property type="entry name" value="CYTOCHROME C BIOGENESIS PROTEIN CCS1, CHLOROPLASTIC"/>
    <property type="match status" value="1"/>
</dbReference>
<dbReference type="PANTHER" id="PTHR31566:SF0">
    <property type="entry name" value="CYTOCHROME C BIOGENESIS PROTEIN CCS1, CHLOROPLASTIC"/>
    <property type="match status" value="1"/>
</dbReference>
<dbReference type="Pfam" id="PF05140">
    <property type="entry name" value="ResB"/>
    <property type="match status" value="2"/>
</dbReference>